<protein>
    <recommendedName>
        <fullName>Actin-54</fullName>
        <ecNumber evidence="1">3.6.4.-</ecNumber>
    </recommendedName>
</protein>
<comment type="function">
    <text>Actins are highly conserved proteins that are involved in various types of cell motility and are ubiquitously expressed in all eukaryotic cells. Essential component of cell cytoskeleton; plays an important role in cytoplasmic streaming, cell shape determination, cell division, organelle movement and extension growth.</text>
</comment>
<comment type="catalytic activity">
    <reaction evidence="1">
        <text>ATP + H2O = ADP + phosphate + H(+)</text>
        <dbReference type="Rhea" id="RHEA:13065"/>
        <dbReference type="ChEBI" id="CHEBI:15377"/>
        <dbReference type="ChEBI" id="CHEBI:15378"/>
        <dbReference type="ChEBI" id="CHEBI:30616"/>
        <dbReference type="ChEBI" id="CHEBI:43474"/>
        <dbReference type="ChEBI" id="CHEBI:456216"/>
    </reaction>
</comment>
<comment type="subcellular location">
    <subcellularLocation>
        <location>Cytoplasm</location>
        <location>Cytoskeleton</location>
    </subcellularLocation>
</comment>
<comment type="miscellaneous">
    <text>There are at least 7 different actin genes in tobacco.</text>
</comment>
<comment type="similarity">
    <text evidence="2">Belongs to the actin family.</text>
</comment>
<proteinExistence type="inferred from homology"/>
<keyword id="KW-0067">ATP-binding</keyword>
<keyword id="KW-0963">Cytoplasm</keyword>
<keyword id="KW-0206">Cytoskeleton</keyword>
<keyword id="KW-0378">Hydrolase</keyword>
<keyword id="KW-0547">Nucleotide-binding</keyword>
<keyword id="KW-1185">Reference proteome</keyword>
<sequence length="339" mass="37488">AGFAGDDAPRAVFPSIVGRPRHTGVMVGMGQKDAYVGDEAQSKRGILTLKYPIEHGIASNWDDMEKIWHHTFYNELRVAPEEHPVLLTEAPLNPKANREKMTQIMFETFSVPAMYVAIQAVLSLYASGRTTGTGIVLDSGDGVSHHVPIYEGYALPHAILRLDLAGRDLTDSLMKILTERGYMFTTTAEREIVRDMKEKLAYVALDYEQELETARSSSSIEKNYELPDGQVITIGAERFRCPEVLFQPSMIGMEAAGIHETTYNSIMKRDVDIRKDLYGNIVLSGGSTMFPGIADRMSKEITALAPSSMKIKVVAPPERKYSVWIGGSILASLSTLQQV</sequence>
<feature type="chain" id="PRO_0000089039" description="Actin-54">
    <location>
        <begin position="1" status="less than"/>
        <end position="339" status="greater than"/>
    </location>
</feature>
<feature type="non-terminal residue">
    <location>
        <position position="1"/>
    </location>
</feature>
<feature type="non-terminal residue">
    <location>
        <position position="339"/>
    </location>
</feature>
<organism>
    <name type="scientific">Nicotiana tabacum</name>
    <name type="common">Common tobacco</name>
    <dbReference type="NCBI Taxonomy" id="4097"/>
    <lineage>
        <taxon>Eukaryota</taxon>
        <taxon>Viridiplantae</taxon>
        <taxon>Streptophyta</taxon>
        <taxon>Embryophyta</taxon>
        <taxon>Tracheophyta</taxon>
        <taxon>Spermatophyta</taxon>
        <taxon>Magnoliopsida</taxon>
        <taxon>eudicotyledons</taxon>
        <taxon>Gunneridae</taxon>
        <taxon>Pentapetalae</taxon>
        <taxon>asterids</taxon>
        <taxon>lamiids</taxon>
        <taxon>Solanales</taxon>
        <taxon>Solanaceae</taxon>
        <taxon>Nicotianoideae</taxon>
        <taxon>Nicotianeae</taxon>
        <taxon>Nicotiana</taxon>
    </lineage>
</organism>
<dbReference type="EC" id="3.6.4.-" evidence="1"/>
<dbReference type="EMBL" id="U60492">
    <property type="protein sequence ID" value="AAB40088.1"/>
    <property type="molecule type" value="Genomic_DNA"/>
</dbReference>
<dbReference type="SMR" id="P93373"/>
<dbReference type="STRING" id="4097.P93373"/>
<dbReference type="PaxDb" id="4097-P93373"/>
<dbReference type="ProMEX" id="P93373"/>
<dbReference type="Proteomes" id="UP000084051">
    <property type="component" value="Unplaced"/>
</dbReference>
<dbReference type="GO" id="GO:0015629">
    <property type="term" value="C:actin cytoskeleton"/>
    <property type="evidence" value="ECO:0000318"/>
    <property type="project" value="GO_Central"/>
</dbReference>
<dbReference type="GO" id="GO:0005829">
    <property type="term" value="C:cytosol"/>
    <property type="evidence" value="ECO:0000318"/>
    <property type="project" value="GO_Central"/>
</dbReference>
<dbReference type="GO" id="GO:0005524">
    <property type="term" value="F:ATP binding"/>
    <property type="evidence" value="ECO:0007669"/>
    <property type="project" value="UniProtKB-KW"/>
</dbReference>
<dbReference type="GO" id="GO:0016787">
    <property type="term" value="F:hydrolase activity"/>
    <property type="evidence" value="ECO:0007669"/>
    <property type="project" value="UniProtKB-KW"/>
</dbReference>
<dbReference type="GO" id="GO:0051301">
    <property type="term" value="P:cell division"/>
    <property type="evidence" value="ECO:0000318"/>
    <property type="project" value="GO_Central"/>
</dbReference>
<dbReference type="CDD" id="cd10224">
    <property type="entry name" value="ASKHA_NBD_actin"/>
    <property type="match status" value="1"/>
</dbReference>
<dbReference type="FunFam" id="3.30.420.40:FF:000291">
    <property type="entry name" value="Actin, alpha skeletal muscle"/>
    <property type="match status" value="1"/>
</dbReference>
<dbReference type="FunFam" id="3.90.640.10:FF:000001">
    <property type="entry name" value="Actin, muscle"/>
    <property type="match status" value="1"/>
</dbReference>
<dbReference type="FunFam" id="3.30.420.40:FF:000404">
    <property type="entry name" value="Major actin"/>
    <property type="match status" value="1"/>
</dbReference>
<dbReference type="Gene3D" id="3.30.420.40">
    <property type="match status" value="2"/>
</dbReference>
<dbReference type="Gene3D" id="3.90.640.10">
    <property type="entry name" value="Actin, Chain A, domain 4"/>
    <property type="match status" value="1"/>
</dbReference>
<dbReference type="InterPro" id="IPR004000">
    <property type="entry name" value="Actin"/>
</dbReference>
<dbReference type="InterPro" id="IPR020902">
    <property type="entry name" value="Actin/actin-like_CS"/>
</dbReference>
<dbReference type="InterPro" id="IPR004001">
    <property type="entry name" value="Actin_CS"/>
</dbReference>
<dbReference type="InterPro" id="IPR043129">
    <property type="entry name" value="ATPase_NBD"/>
</dbReference>
<dbReference type="PANTHER" id="PTHR11937">
    <property type="entry name" value="ACTIN"/>
    <property type="match status" value="1"/>
</dbReference>
<dbReference type="Pfam" id="PF00022">
    <property type="entry name" value="Actin"/>
    <property type="match status" value="1"/>
</dbReference>
<dbReference type="PRINTS" id="PR00190">
    <property type="entry name" value="ACTIN"/>
</dbReference>
<dbReference type="SMART" id="SM00268">
    <property type="entry name" value="ACTIN"/>
    <property type="match status" value="1"/>
</dbReference>
<dbReference type="SUPFAM" id="SSF53067">
    <property type="entry name" value="Actin-like ATPase domain"/>
    <property type="match status" value="2"/>
</dbReference>
<dbReference type="PROSITE" id="PS00406">
    <property type="entry name" value="ACTINS_1"/>
    <property type="match status" value="1"/>
</dbReference>
<dbReference type="PROSITE" id="PS01132">
    <property type="entry name" value="ACTINS_ACT_LIKE"/>
    <property type="match status" value="1"/>
</dbReference>
<evidence type="ECO:0000250" key="1">
    <source>
        <dbReference type="UniProtKB" id="P68137"/>
    </source>
</evidence>
<evidence type="ECO:0000305" key="2"/>
<accession>P93373</accession>
<reference key="1">
    <citation type="journal article" date="1996" name="Mol. Biol. Evol.">
        <title>Phylogeny and substitution rates of angiosperm actin genes.</title>
        <authorList>
            <person name="Moniz de Sa M."/>
            <person name="Drouin G."/>
        </authorList>
    </citation>
    <scope>NUCLEOTIDE SEQUENCE [GENOMIC DNA]</scope>
</reference>
<name>ACT3_TOBAC</name>